<dbReference type="EC" id="1.5.5.1"/>
<dbReference type="EMBL" id="AK002483">
    <property type="protein sequence ID" value="BAB22135.1"/>
    <property type="molecule type" value="mRNA"/>
</dbReference>
<dbReference type="EMBL" id="AK075673">
    <property type="protein sequence ID" value="BAC35888.1"/>
    <property type="molecule type" value="mRNA"/>
</dbReference>
<dbReference type="EMBL" id="AK141684">
    <property type="protein sequence ID" value="BAE24798.1"/>
    <property type="molecule type" value="mRNA"/>
</dbReference>
<dbReference type="EMBL" id="AK152624">
    <property type="protein sequence ID" value="BAE31367.1"/>
    <property type="molecule type" value="mRNA"/>
</dbReference>
<dbReference type="EMBL" id="AK169686">
    <property type="protein sequence ID" value="BAE41304.1"/>
    <property type="molecule type" value="mRNA"/>
</dbReference>
<dbReference type="EMBL" id="BC012522">
    <property type="protein sequence ID" value="AAH12522.1"/>
    <property type="molecule type" value="mRNA"/>
</dbReference>
<dbReference type="CCDS" id="CCDS17418.1"/>
<dbReference type="RefSeq" id="NP_080070.2">
    <property type="nucleotide sequence ID" value="NM_025794.2"/>
</dbReference>
<dbReference type="SMR" id="Q921G7"/>
<dbReference type="BioGRID" id="211757">
    <property type="interactions" value="32"/>
</dbReference>
<dbReference type="FunCoup" id="Q921G7">
    <property type="interactions" value="2448"/>
</dbReference>
<dbReference type="IntAct" id="Q921G7">
    <property type="interactions" value="1"/>
</dbReference>
<dbReference type="STRING" id="10090.ENSMUSP00000029386"/>
<dbReference type="GlyGen" id="Q921G7">
    <property type="glycosylation" value="2 sites, 1 O-linked glycan (2 sites)"/>
</dbReference>
<dbReference type="iPTMnet" id="Q921G7"/>
<dbReference type="PhosphoSitePlus" id="Q921G7"/>
<dbReference type="SwissPalm" id="Q921G7"/>
<dbReference type="jPOST" id="Q921G7"/>
<dbReference type="PaxDb" id="10090-ENSMUSP00000029386"/>
<dbReference type="PeptideAtlas" id="Q921G7"/>
<dbReference type="ProteomicsDB" id="275484"/>
<dbReference type="Pumba" id="Q921G7"/>
<dbReference type="Antibodypedia" id="45630">
    <property type="antibodies" value="279 antibodies from 31 providers"/>
</dbReference>
<dbReference type="DNASU" id="66841"/>
<dbReference type="Ensembl" id="ENSMUST00000029386.14">
    <property type="protein sequence ID" value="ENSMUSP00000029386.8"/>
    <property type="gene ID" value="ENSMUSG00000027809.15"/>
</dbReference>
<dbReference type="GeneID" id="66841"/>
<dbReference type="KEGG" id="mmu:66841"/>
<dbReference type="UCSC" id="uc008pnq.2">
    <property type="organism name" value="mouse"/>
</dbReference>
<dbReference type="AGR" id="MGI:106100"/>
<dbReference type="CTD" id="2110"/>
<dbReference type="MGI" id="MGI:106100">
    <property type="gene designation" value="Etfdh"/>
</dbReference>
<dbReference type="VEuPathDB" id="HostDB:ENSMUSG00000027809"/>
<dbReference type="eggNOG" id="KOG2415">
    <property type="taxonomic scope" value="Eukaryota"/>
</dbReference>
<dbReference type="GeneTree" id="ENSGT00390000010773"/>
<dbReference type="InParanoid" id="Q921G7"/>
<dbReference type="OMA" id="INFQNCV"/>
<dbReference type="OrthoDB" id="437331at2759"/>
<dbReference type="PhylomeDB" id="Q921G7"/>
<dbReference type="TreeFam" id="TF105687"/>
<dbReference type="Reactome" id="R-MMU-611105">
    <property type="pathway name" value="Respiratory electron transport"/>
</dbReference>
<dbReference type="BioGRID-ORCS" id="66841">
    <property type="hits" value="6 hits in 78 CRISPR screens"/>
</dbReference>
<dbReference type="PRO" id="PR:Q921G7"/>
<dbReference type="Proteomes" id="UP000000589">
    <property type="component" value="Chromosome 3"/>
</dbReference>
<dbReference type="RNAct" id="Q921G7">
    <property type="molecule type" value="protein"/>
</dbReference>
<dbReference type="Bgee" id="ENSMUSG00000027809">
    <property type="expression patterns" value="Expressed in heart right ventricle and 259 other cell types or tissues"/>
</dbReference>
<dbReference type="ExpressionAtlas" id="Q921G7">
    <property type="expression patterns" value="baseline and differential"/>
</dbReference>
<dbReference type="GO" id="GO:0005829">
    <property type="term" value="C:cytosol"/>
    <property type="evidence" value="ECO:0007669"/>
    <property type="project" value="Ensembl"/>
</dbReference>
<dbReference type="GO" id="GO:0016020">
    <property type="term" value="C:membrane"/>
    <property type="evidence" value="ECO:0000250"/>
    <property type="project" value="UniProtKB"/>
</dbReference>
<dbReference type="GO" id="GO:0017133">
    <property type="term" value="C:mitochondrial electron transfer flavoprotein complex"/>
    <property type="evidence" value="ECO:0000304"/>
    <property type="project" value="MGI"/>
</dbReference>
<dbReference type="GO" id="GO:0005743">
    <property type="term" value="C:mitochondrial inner membrane"/>
    <property type="evidence" value="ECO:0007005"/>
    <property type="project" value="MGI"/>
</dbReference>
<dbReference type="GO" id="GO:0005739">
    <property type="term" value="C:mitochondrion"/>
    <property type="evidence" value="ECO:0007005"/>
    <property type="project" value="MGI"/>
</dbReference>
<dbReference type="GO" id="GO:0005654">
    <property type="term" value="C:nucleoplasm"/>
    <property type="evidence" value="ECO:0007669"/>
    <property type="project" value="Ensembl"/>
</dbReference>
<dbReference type="GO" id="GO:0051539">
    <property type="term" value="F:4 iron, 4 sulfur cluster binding"/>
    <property type="evidence" value="ECO:0007669"/>
    <property type="project" value="UniProtKB-KW"/>
</dbReference>
<dbReference type="GO" id="GO:0009055">
    <property type="term" value="F:electron transfer activity"/>
    <property type="evidence" value="ECO:0000250"/>
    <property type="project" value="UniProtKB"/>
</dbReference>
<dbReference type="GO" id="GO:0004174">
    <property type="term" value="F:electron-transferring-flavoprotein dehydrogenase activity"/>
    <property type="evidence" value="ECO:0000250"/>
    <property type="project" value="UniProtKB"/>
</dbReference>
<dbReference type="GO" id="GO:0046872">
    <property type="term" value="F:metal ion binding"/>
    <property type="evidence" value="ECO:0007669"/>
    <property type="project" value="UniProtKB-KW"/>
</dbReference>
<dbReference type="GO" id="GO:0016491">
    <property type="term" value="F:oxidoreductase activity"/>
    <property type="evidence" value="ECO:0000250"/>
    <property type="project" value="UniProtKB"/>
</dbReference>
<dbReference type="GO" id="GO:0048039">
    <property type="term" value="F:ubiquinone binding"/>
    <property type="evidence" value="ECO:0007669"/>
    <property type="project" value="Ensembl"/>
</dbReference>
<dbReference type="GO" id="GO:0033539">
    <property type="term" value="P:fatty acid beta-oxidation using acyl-CoA dehydrogenase"/>
    <property type="evidence" value="ECO:0007669"/>
    <property type="project" value="Ensembl"/>
</dbReference>
<dbReference type="GO" id="GO:0006979">
    <property type="term" value="P:response to oxidative stress"/>
    <property type="evidence" value="ECO:0000314"/>
    <property type="project" value="UniProtKB"/>
</dbReference>
<dbReference type="FunFam" id="3.30.70.20:FF:000088">
    <property type="entry name" value="Electron transfer flavoprotein-ubiquinone oxidoreductase, mitochondrial"/>
    <property type="match status" value="1"/>
</dbReference>
<dbReference type="Gene3D" id="3.30.70.20">
    <property type="match status" value="1"/>
</dbReference>
<dbReference type="Gene3D" id="3.30.9.90">
    <property type="match status" value="1"/>
</dbReference>
<dbReference type="Gene3D" id="3.50.50.60">
    <property type="entry name" value="FAD/NAD(P)-binding domain"/>
    <property type="match status" value="1"/>
</dbReference>
<dbReference type="InterPro" id="IPR017896">
    <property type="entry name" value="4Fe4S_Fe-S-bd"/>
</dbReference>
<dbReference type="InterPro" id="IPR040156">
    <property type="entry name" value="ETF-QO"/>
</dbReference>
<dbReference type="InterPro" id="IPR049398">
    <property type="entry name" value="ETF-QO/FixC_UQ-bd"/>
</dbReference>
<dbReference type="InterPro" id="IPR007859">
    <property type="entry name" value="ETF-QO/FixX_C"/>
</dbReference>
<dbReference type="InterPro" id="IPR036188">
    <property type="entry name" value="FAD/NAD-bd_sf"/>
</dbReference>
<dbReference type="PANTHER" id="PTHR10617">
    <property type="entry name" value="ELECTRON TRANSFER FLAVOPROTEIN-UBIQUINONE OXIDOREDUCTASE"/>
    <property type="match status" value="1"/>
</dbReference>
<dbReference type="PANTHER" id="PTHR10617:SF107">
    <property type="entry name" value="ELECTRON TRANSFER FLAVOPROTEIN-UBIQUINONE OXIDOREDUCTASE, MITOCHONDRIAL"/>
    <property type="match status" value="1"/>
</dbReference>
<dbReference type="Pfam" id="PF21162">
    <property type="entry name" value="ETFQO_UQ-bd"/>
    <property type="match status" value="1"/>
</dbReference>
<dbReference type="Pfam" id="PF05187">
    <property type="entry name" value="Fer4_ETF_QO"/>
    <property type="match status" value="1"/>
</dbReference>
<dbReference type="Pfam" id="PF01946">
    <property type="entry name" value="Thi4"/>
    <property type="match status" value="1"/>
</dbReference>
<dbReference type="PRINTS" id="PR00469">
    <property type="entry name" value="PNDRDTASEII"/>
</dbReference>
<dbReference type="SUPFAM" id="SSF54862">
    <property type="entry name" value="4Fe-4S ferredoxins"/>
    <property type="match status" value="1"/>
</dbReference>
<dbReference type="SUPFAM" id="SSF54373">
    <property type="entry name" value="FAD-linked reductases, C-terminal domain"/>
    <property type="match status" value="1"/>
</dbReference>
<dbReference type="SUPFAM" id="SSF51905">
    <property type="entry name" value="FAD/NAD(P)-binding domain"/>
    <property type="match status" value="1"/>
</dbReference>
<dbReference type="PROSITE" id="PS51379">
    <property type="entry name" value="4FE4S_FER_2"/>
    <property type="match status" value="1"/>
</dbReference>
<protein>
    <recommendedName>
        <fullName>Electron transfer flavoprotein-ubiquinone oxidoreductase, mitochondrial</fullName>
        <shortName>ETF-QO</shortName>
        <shortName>ETF-ubiquinone oxidoreductase</shortName>
        <ecNumber>1.5.5.1</ecNumber>
    </recommendedName>
    <alternativeName>
        <fullName>Electron-transferring-flavoprotein dehydrogenase</fullName>
        <shortName>ETF dehydrogenase</shortName>
    </alternativeName>
</protein>
<keyword id="KW-0004">4Fe-4S</keyword>
<keyword id="KW-0007">Acetylation</keyword>
<keyword id="KW-0903">Direct protein sequencing</keyword>
<keyword id="KW-0249">Electron transport</keyword>
<keyword id="KW-0274">FAD</keyword>
<keyword id="KW-0285">Flavoprotein</keyword>
<keyword id="KW-0408">Iron</keyword>
<keyword id="KW-0411">Iron-sulfur</keyword>
<keyword id="KW-0472">Membrane</keyword>
<keyword id="KW-0479">Metal-binding</keyword>
<keyword id="KW-0496">Mitochondrion</keyword>
<keyword id="KW-0999">Mitochondrion inner membrane</keyword>
<keyword id="KW-0560">Oxidoreductase</keyword>
<keyword id="KW-0597">Phosphoprotein</keyword>
<keyword id="KW-1185">Reference proteome</keyword>
<keyword id="KW-0809">Transit peptide</keyword>
<keyword id="KW-0813">Transport</keyword>
<keyword id="KW-0830">Ubiquinone</keyword>
<name>ETFD_MOUSE</name>
<feature type="transit peptide" description="Mitochondrion" evidence="2">
    <location>
        <begin position="1"/>
        <end position="32"/>
    </location>
</feature>
<feature type="chain" id="PRO_0000008662" description="Electron transfer flavoprotein-ubiquinone oxidoreductase, mitochondrial">
    <location>
        <begin position="33"/>
        <end position="616"/>
    </location>
</feature>
<feature type="intramembrane region" evidence="1">
    <location>
        <begin position="108"/>
        <end position="129"/>
    </location>
</feature>
<feature type="intramembrane region" evidence="1">
    <location>
        <begin position="427"/>
        <end position="446"/>
    </location>
</feature>
<feature type="domain" description="4Fe-4S ferredoxin-type" evidence="3">
    <location>
        <begin position="576"/>
        <end position="605"/>
    </location>
</feature>
<feature type="binding site" evidence="2">
    <location>
        <begin position="70"/>
        <end position="84"/>
    </location>
    <ligand>
        <name>FAD</name>
        <dbReference type="ChEBI" id="CHEBI:57692"/>
    </ligand>
</feature>
<feature type="binding site" evidence="1">
    <location>
        <position position="304"/>
    </location>
    <ligand>
        <name>a ubiquinone</name>
        <dbReference type="ChEBI" id="CHEBI:16389"/>
    </ligand>
</feature>
<feature type="binding site" evidence="1">
    <location>
        <position position="305"/>
    </location>
    <ligand>
        <name>a ubiquinone</name>
        <dbReference type="ChEBI" id="CHEBI:16389"/>
    </ligand>
</feature>
<feature type="binding site" evidence="2">
    <location>
        <position position="560"/>
    </location>
    <ligand>
        <name>[4Fe-4S] cluster</name>
        <dbReference type="ChEBI" id="CHEBI:49883"/>
    </ligand>
</feature>
<feature type="binding site" evidence="2">
    <location>
        <position position="585"/>
    </location>
    <ligand>
        <name>[4Fe-4S] cluster</name>
        <dbReference type="ChEBI" id="CHEBI:49883"/>
    </ligand>
</feature>
<feature type="binding site" evidence="2">
    <location>
        <position position="588"/>
    </location>
    <ligand>
        <name>[4Fe-4S] cluster</name>
        <dbReference type="ChEBI" id="CHEBI:49883"/>
    </ligand>
</feature>
<feature type="binding site" evidence="2">
    <location>
        <position position="591"/>
    </location>
    <ligand>
        <name>[4Fe-4S] cluster</name>
        <dbReference type="ChEBI" id="CHEBI:49883"/>
    </ligand>
</feature>
<feature type="modified residue" description="N6-acetyllysine" evidence="5">
    <location>
        <position position="95"/>
    </location>
</feature>
<feature type="modified residue" description="N6-acetyllysine" evidence="8">
    <location>
        <position position="131"/>
    </location>
</feature>
<feature type="modified residue" description="N6-acetyllysine" evidence="8">
    <location>
        <position position="222"/>
    </location>
</feature>
<feature type="modified residue" description="N6-acetyllysine" evidence="8">
    <location>
        <position position="356"/>
    </location>
</feature>
<feature type="modified residue" description="N6-acetyllysine" evidence="8">
    <location>
        <position position="415"/>
    </location>
</feature>
<feature type="modified residue" description="Phosphoserine" evidence="6 7">
    <location>
        <position position="550"/>
    </location>
</feature>
<feature type="sequence conflict" description="In Ref. 1; BAB22135." evidence="4" ref="1">
    <original>W</original>
    <variation>C</variation>
    <location>
        <position position="342"/>
    </location>
</feature>
<feature type="sequence conflict" description="In Ref. 1; BAC35888." evidence="4" ref="1">
    <original>G</original>
    <variation>W</variation>
    <location>
        <position position="355"/>
    </location>
</feature>
<evidence type="ECO:0000250" key="1"/>
<evidence type="ECO:0000255" key="2"/>
<evidence type="ECO:0000255" key="3">
    <source>
        <dbReference type="PROSITE-ProRule" id="PRU00711"/>
    </source>
</evidence>
<evidence type="ECO:0000305" key="4"/>
<evidence type="ECO:0007744" key="5">
    <source>
    </source>
</evidence>
<evidence type="ECO:0007744" key="6">
    <source>
    </source>
</evidence>
<evidence type="ECO:0007744" key="7">
    <source>
    </source>
</evidence>
<evidence type="ECO:0007744" key="8">
    <source>
    </source>
</evidence>
<accession>Q921G7</accession>
<accession>Q3U7K2</accession>
<accession>Q8BK82</accession>
<accession>Q9DCT9</accession>
<sequence>MLVRLTKLSCPAYHWFHALKIKKCLPLCAPRCSSTSAVPQITTHYTVHPREKDKRWEGVNMERFAEEADVVIVGAGPAGLSAAIRLKQLAAEQGKDIRVCLVEKAAQIGAHTLSGACLDPAAFKELFPDWKEKGAPLNTPVTEDRFAILTEKHRIPVPILPGLPMNNHGNYIVRLGHLVSWMGEQAEALGVEVYPGYAAAEVLYHEDGSVKGIATNDVGIQKDGAPKTTFERGLELHAKVTVFAEGCHGHLAKQLYKKFDLRASCDAQTYGIGLKELWIIDEKKWKPGRVDHTVGWPLDRHTYGGSFLYHLNEGEPLVAVGFVVGLDYQNPYLSPFREFQRWKHHPSIQPTLEGGKRIAYGARALNEGGLQSIPKLTFPGGLLIGCSPGFMNVPKIKGTHTAMKSGSLAAESIFKQLTSENLQSKTTGLHVTEYEDNLKQSWVWKELHAVRNIRPSCHGILGVYGGMIYTGIFYWILRGMEPWTLKHKGSDSDQLKPAKDCTPIEYPKPDGQISFDLLSSVALSGTNHEHDQPAHLTLKDDSIPVNRNLSIYDGPEQRFCPAGVYEFVPLEQGDGFRLQINAQNCVHCKTCDIKDPSQNINWVVPEGGGGPAYNGM</sequence>
<proteinExistence type="evidence at protein level"/>
<gene>
    <name type="primary">Etfdh</name>
</gene>
<organism>
    <name type="scientific">Mus musculus</name>
    <name type="common">Mouse</name>
    <dbReference type="NCBI Taxonomy" id="10090"/>
    <lineage>
        <taxon>Eukaryota</taxon>
        <taxon>Metazoa</taxon>
        <taxon>Chordata</taxon>
        <taxon>Craniata</taxon>
        <taxon>Vertebrata</taxon>
        <taxon>Euteleostomi</taxon>
        <taxon>Mammalia</taxon>
        <taxon>Eutheria</taxon>
        <taxon>Euarchontoglires</taxon>
        <taxon>Glires</taxon>
        <taxon>Rodentia</taxon>
        <taxon>Myomorpha</taxon>
        <taxon>Muroidea</taxon>
        <taxon>Muridae</taxon>
        <taxon>Murinae</taxon>
        <taxon>Mus</taxon>
        <taxon>Mus</taxon>
    </lineage>
</organism>
<comment type="function">
    <text evidence="1">Accepts electrons from ETF and reduces ubiquinone.</text>
</comment>
<comment type="catalytic activity">
    <reaction>
        <text>a ubiquinone + reduced [electron-transfer flavoprotein] = a ubiquinol + oxidized [electron-transfer flavoprotein] + H(+)</text>
        <dbReference type="Rhea" id="RHEA:24052"/>
        <dbReference type="Rhea" id="RHEA-COMP:9565"/>
        <dbReference type="Rhea" id="RHEA-COMP:9566"/>
        <dbReference type="Rhea" id="RHEA-COMP:10685"/>
        <dbReference type="Rhea" id="RHEA-COMP:10686"/>
        <dbReference type="ChEBI" id="CHEBI:15378"/>
        <dbReference type="ChEBI" id="CHEBI:16389"/>
        <dbReference type="ChEBI" id="CHEBI:17976"/>
        <dbReference type="ChEBI" id="CHEBI:57692"/>
        <dbReference type="ChEBI" id="CHEBI:58307"/>
        <dbReference type="EC" id="1.5.5.1"/>
    </reaction>
</comment>
<comment type="cofactor">
    <cofactor evidence="1">
        <name>[4Fe-4S] cluster</name>
        <dbReference type="ChEBI" id="CHEBI:49883"/>
    </cofactor>
    <text evidence="1">Binds 1 [4Fe-4S] cluster.</text>
</comment>
<comment type="cofactor">
    <cofactor evidence="1">
        <name>FAD</name>
        <dbReference type="ChEBI" id="CHEBI:57692"/>
    </cofactor>
</comment>
<comment type="subunit">
    <text evidence="1">Monomer.</text>
</comment>
<comment type="subcellular location">
    <subcellularLocation>
        <location evidence="1">Mitochondrion inner membrane</location>
    </subcellularLocation>
</comment>
<comment type="PTM">
    <text>Acetylation of Lys-95 and Lys-222 is observed in liver mitochondria from fasted mice but not from fed mice.</text>
</comment>
<comment type="similarity">
    <text evidence="4">Belongs to the ETF-QO/FixC family.</text>
</comment>
<reference key="1">
    <citation type="journal article" date="2005" name="Science">
        <title>The transcriptional landscape of the mammalian genome.</title>
        <authorList>
            <person name="Carninci P."/>
            <person name="Kasukawa T."/>
            <person name="Katayama S."/>
            <person name="Gough J."/>
            <person name="Frith M.C."/>
            <person name="Maeda N."/>
            <person name="Oyama R."/>
            <person name="Ravasi T."/>
            <person name="Lenhard B."/>
            <person name="Wells C."/>
            <person name="Kodzius R."/>
            <person name="Shimokawa K."/>
            <person name="Bajic V.B."/>
            <person name="Brenner S.E."/>
            <person name="Batalov S."/>
            <person name="Forrest A.R."/>
            <person name="Zavolan M."/>
            <person name="Davis M.J."/>
            <person name="Wilming L.G."/>
            <person name="Aidinis V."/>
            <person name="Allen J.E."/>
            <person name="Ambesi-Impiombato A."/>
            <person name="Apweiler R."/>
            <person name="Aturaliya R.N."/>
            <person name="Bailey T.L."/>
            <person name="Bansal M."/>
            <person name="Baxter L."/>
            <person name="Beisel K.W."/>
            <person name="Bersano T."/>
            <person name="Bono H."/>
            <person name="Chalk A.M."/>
            <person name="Chiu K.P."/>
            <person name="Choudhary V."/>
            <person name="Christoffels A."/>
            <person name="Clutterbuck D.R."/>
            <person name="Crowe M.L."/>
            <person name="Dalla E."/>
            <person name="Dalrymple B.P."/>
            <person name="de Bono B."/>
            <person name="Della Gatta G."/>
            <person name="di Bernardo D."/>
            <person name="Down T."/>
            <person name="Engstrom P."/>
            <person name="Fagiolini M."/>
            <person name="Faulkner G."/>
            <person name="Fletcher C.F."/>
            <person name="Fukushima T."/>
            <person name="Furuno M."/>
            <person name="Futaki S."/>
            <person name="Gariboldi M."/>
            <person name="Georgii-Hemming P."/>
            <person name="Gingeras T.R."/>
            <person name="Gojobori T."/>
            <person name="Green R.E."/>
            <person name="Gustincich S."/>
            <person name="Harbers M."/>
            <person name="Hayashi Y."/>
            <person name="Hensch T.K."/>
            <person name="Hirokawa N."/>
            <person name="Hill D."/>
            <person name="Huminiecki L."/>
            <person name="Iacono M."/>
            <person name="Ikeo K."/>
            <person name="Iwama A."/>
            <person name="Ishikawa T."/>
            <person name="Jakt M."/>
            <person name="Kanapin A."/>
            <person name="Katoh M."/>
            <person name="Kawasawa Y."/>
            <person name="Kelso J."/>
            <person name="Kitamura H."/>
            <person name="Kitano H."/>
            <person name="Kollias G."/>
            <person name="Krishnan S.P."/>
            <person name="Kruger A."/>
            <person name="Kummerfeld S.K."/>
            <person name="Kurochkin I.V."/>
            <person name="Lareau L.F."/>
            <person name="Lazarevic D."/>
            <person name="Lipovich L."/>
            <person name="Liu J."/>
            <person name="Liuni S."/>
            <person name="McWilliam S."/>
            <person name="Madan Babu M."/>
            <person name="Madera M."/>
            <person name="Marchionni L."/>
            <person name="Matsuda H."/>
            <person name="Matsuzawa S."/>
            <person name="Miki H."/>
            <person name="Mignone F."/>
            <person name="Miyake S."/>
            <person name="Morris K."/>
            <person name="Mottagui-Tabar S."/>
            <person name="Mulder N."/>
            <person name="Nakano N."/>
            <person name="Nakauchi H."/>
            <person name="Ng P."/>
            <person name="Nilsson R."/>
            <person name="Nishiguchi S."/>
            <person name="Nishikawa S."/>
            <person name="Nori F."/>
            <person name="Ohara O."/>
            <person name="Okazaki Y."/>
            <person name="Orlando V."/>
            <person name="Pang K.C."/>
            <person name="Pavan W.J."/>
            <person name="Pavesi G."/>
            <person name="Pesole G."/>
            <person name="Petrovsky N."/>
            <person name="Piazza S."/>
            <person name="Reed J."/>
            <person name="Reid J.F."/>
            <person name="Ring B.Z."/>
            <person name="Ringwald M."/>
            <person name="Rost B."/>
            <person name="Ruan Y."/>
            <person name="Salzberg S.L."/>
            <person name="Sandelin A."/>
            <person name="Schneider C."/>
            <person name="Schoenbach C."/>
            <person name="Sekiguchi K."/>
            <person name="Semple C.A."/>
            <person name="Seno S."/>
            <person name="Sessa L."/>
            <person name="Sheng Y."/>
            <person name="Shibata Y."/>
            <person name="Shimada H."/>
            <person name="Shimada K."/>
            <person name="Silva D."/>
            <person name="Sinclair B."/>
            <person name="Sperling S."/>
            <person name="Stupka E."/>
            <person name="Sugiura K."/>
            <person name="Sultana R."/>
            <person name="Takenaka Y."/>
            <person name="Taki K."/>
            <person name="Tammoja K."/>
            <person name="Tan S.L."/>
            <person name="Tang S."/>
            <person name="Taylor M.S."/>
            <person name="Tegner J."/>
            <person name="Teichmann S.A."/>
            <person name="Ueda H.R."/>
            <person name="van Nimwegen E."/>
            <person name="Verardo R."/>
            <person name="Wei C.L."/>
            <person name="Yagi K."/>
            <person name="Yamanishi H."/>
            <person name="Zabarovsky E."/>
            <person name="Zhu S."/>
            <person name="Zimmer A."/>
            <person name="Hide W."/>
            <person name="Bult C."/>
            <person name="Grimmond S.M."/>
            <person name="Teasdale R.D."/>
            <person name="Liu E.T."/>
            <person name="Brusic V."/>
            <person name="Quackenbush J."/>
            <person name="Wahlestedt C."/>
            <person name="Mattick J.S."/>
            <person name="Hume D.A."/>
            <person name="Kai C."/>
            <person name="Sasaki D."/>
            <person name="Tomaru Y."/>
            <person name="Fukuda S."/>
            <person name="Kanamori-Katayama M."/>
            <person name="Suzuki M."/>
            <person name="Aoki J."/>
            <person name="Arakawa T."/>
            <person name="Iida J."/>
            <person name="Imamura K."/>
            <person name="Itoh M."/>
            <person name="Kato T."/>
            <person name="Kawaji H."/>
            <person name="Kawagashira N."/>
            <person name="Kawashima T."/>
            <person name="Kojima M."/>
            <person name="Kondo S."/>
            <person name="Konno H."/>
            <person name="Nakano K."/>
            <person name="Ninomiya N."/>
            <person name="Nishio T."/>
            <person name="Okada M."/>
            <person name="Plessy C."/>
            <person name="Shibata K."/>
            <person name="Shiraki T."/>
            <person name="Suzuki S."/>
            <person name="Tagami M."/>
            <person name="Waki K."/>
            <person name="Watahiki A."/>
            <person name="Okamura-Oho Y."/>
            <person name="Suzuki H."/>
            <person name="Kawai J."/>
            <person name="Hayashizaki Y."/>
        </authorList>
    </citation>
    <scope>NUCLEOTIDE SEQUENCE [LARGE SCALE MRNA]</scope>
    <source>
        <strain>C57BL/6J</strain>
        <strain>NOD</strain>
        <tissue>Bone marrow</tissue>
        <tissue>Kidney</tissue>
        <tissue>Thymus</tissue>
    </source>
</reference>
<reference key="2">
    <citation type="journal article" date="2004" name="Genome Res.">
        <title>The status, quality, and expansion of the NIH full-length cDNA project: the Mammalian Gene Collection (MGC).</title>
        <authorList>
            <consortium name="The MGC Project Team"/>
        </authorList>
    </citation>
    <scope>NUCLEOTIDE SEQUENCE [LARGE SCALE MRNA]</scope>
    <source>
        <strain>FVB/N</strain>
        <tissue>Mammary tumor</tissue>
    </source>
</reference>
<reference key="3">
    <citation type="submission" date="2007-04" db="UniProtKB">
        <authorList>
            <person name="Lubec G."/>
            <person name="Kang S.U."/>
        </authorList>
    </citation>
    <scope>PROTEIN SEQUENCE OF 212-222</scope>
    <scope>IDENTIFICATION BY MASS SPECTROMETRY</scope>
    <source>
        <strain>C57BL/6J</strain>
        <tissue>Brain</tissue>
    </source>
</reference>
<reference key="4">
    <citation type="journal article" date="2006" name="Mol. Cell">
        <title>Substrate and functional diversity of lysine acetylation revealed by a proteomics survey.</title>
        <authorList>
            <person name="Kim S.C."/>
            <person name="Sprung R."/>
            <person name="Chen Y."/>
            <person name="Xu Y."/>
            <person name="Ball H."/>
            <person name="Pei J."/>
            <person name="Cheng T."/>
            <person name="Kho Y."/>
            <person name="Xiao H."/>
            <person name="Xiao L."/>
            <person name="Grishin N.V."/>
            <person name="White M."/>
            <person name="Yang X.-J."/>
            <person name="Zhao Y."/>
        </authorList>
    </citation>
    <scope>ACETYLATION [LARGE SCALE ANALYSIS] AT LYS-95</scope>
    <scope>IDENTIFICATION BY MASS SPECTROMETRY [LARGE SCALE ANALYSIS]</scope>
    <source>
        <tissue>Liver</tissue>
    </source>
</reference>
<reference key="5">
    <citation type="journal article" date="2007" name="Proc. Natl. Acad. Sci. U.S.A.">
        <title>Large-scale phosphorylation analysis of mouse liver.</title>
        <authorList>
            <person name="Villen J."/>
            <person name="Beausoleil S.A."/>
            <person name="Gerber S.A."/>
            <person name="Gygi S.P."/>
        </authorList>
    </citation>
    <scope>PHOSPHORYLATION [LARGE SCALE ANALYSIS] AT SER-550</scope>
    <scope>IDENTIFICATION BY MASS SPECTROMETRY [LARGE SCALE ANALYSIS]</scope>
    <source>
        <tissue>Liver</tissue>
    </source>
</reference>
<reference key="6">
    <citation type="journal article" date="2010" name="Cell">
        <title>A tissue-specific atlas of mouse protein phosphorylation and expression.</title>
        <authorList>
            <person name="Huttlin E.L."/>
            <person name="Jedrychowski M.P."/>
            <person name="Elias J.E."/>
            <person name="Goswami T."/>
            <person name="Rad R."/>
            <person name="Beausoleil S.A."/>
            <person name="Villen J."/>
            <person name="Haas W."/>
            <person name="Sowa M.E."/>
            <person name="Gygi S.P."/>
        </authorList>
    </citation>
    <scope>PHOSPHORYLATION [LARGE SCALE ANALYSIS] AT SER-550</scope>
    <scope>IDENTIFICATION BY MASS SPECTROMETRY [LARGE SCALE ANALYSIS]</scope>
    <source>
        <tissue>Brain</tissue>
        <tissue>Brown adipose tissue</tissue>
        <tissue>Heart</tissue>
        <tissue>Kidney</tissue>
        <tissue>Liver</tissue>
        <tissue>Lung</tissue>
        <tissue>Pancreas</tissue>
        <tissue>Spleen</tissue>
        <tissue>Testis</tissue>
    </source>
</reference>
<reference key="7">
    <citation type="journal article" date="2013" name="Proc. Natl. Acad. Sci. U.S.A.">
        <title>Label-free quantitative proteomics of the lysine acetylome in mitochondria identifies substrates of SIRT3 in metabolic pathways.</title>
        <authorList>
            <person name="Rardin M.J."/>
            <person name="Newman J.C."/>
            <person name="Held J.M."/>
            <person name="Cusack M.P."/>
            <person name="Sorensen D.J."/>
            <person name="Li B."/>
            <person name="Schilling B."/>
            <person name="Mooney S.D."/>
            <person name="Kahn C.R."/>
            <person name="Verdin E."/>
            <person name="Gibson B.W."/>
        </authorList>
    </citation>
    <scope>ACETYLATION [LARGE SCALE ANALYSIS] AT LYS-131; LYS-222; LYS-356 AND LYS-415</scope>
    <scope>IDENTIFICATION BY MASS SPECTROMETRY [LARGE SCALE ANALYSIS]</scope>
    <source>
        <tissue>Liver</tissue>
    </source>
</reference>